<feature type="chain" id="PRO_0000110095" description="Fluoride-specific ion channel FluC">
    <location>
        <begin position="1"/>
        <end position="128"/>
    </location>
</feature>
<feature type="transmembrane region" description="Helical" evidence="1">
    <location>
        <begin position="4"/>
        <end position="24"/>
    </location>
</feature>
<feature type="transmembrane region" description="Helical" evidence="1">
    <location>
        <begin position="37"/>
        <end position="57"/>
    </location>
</feature>
<feature type="transmembrane region" description="Helical" evidence="1">
    <location>
        <begin position="65"/>
        <end position="85"/>
    </location>
</feature>
<feature type="transmembrane region" description="Helical" evidence="1">
    <location>
        <begin position="101"/>
        <end position="121"/>
    </location>
</feature>
<feature type="binding site" evidence="1">
    <location>
        <position position="76"/>
    </location>
    <ligand>
        <name>Na(+)</name>
        <dbReference type="ChEBI" id="CHEBI:29101"/>
        <note>structural</note>
    </ligand>
</feature>
<feature type="binding site" evidence="1">
    <location>
        <position position="79"/>
    </location>
    <ligand>
        <name>Na(+)</name>
        <dbReference type="ChEBI" id="CHEBI:29101"/>
        <note>structural</note>
    </ligand>
</feature>
<proteinExistence type="inferred from homology"/>
<sequence length="128" mass="14037">MDPVMGIIAVALGGAVGSLARYAIALGTQKIAHAFPFGTFIANLAGCLFIGLLWSFFEKIHISHTFRLFLFTGLLGGLTTFSTFSRETYGFFETGEYWQGFGYLFLSISLGLAMVAVGFFISHKFLLR</sequence>
<comment type="function">
    <text evidence="1">Fluoride-specific ion channel. Important for reducing fluoride concentration in the cell, thus reducing its toxicity.</text>
</comment>
<comment type="catalytic activity">
    <reaction evidence="1">
        <text>fluoride(in) = fluoride(out)</text>
        <dbReference type="Rhea" id="RHEA:76159"/>
        <dbReference type="ChEBI" id="CHEBI:17051"/>
    </reaction>
    <physiologicalReaction direction="left-to-right" evidence="1">
        <dbReference type="Rhea" id="RHEA:76160"/>
    </physiologicalReaction>
</comment>
<comment type="activity regulation">
    <text evidence="1">Na(+) is not transported, but it plays an essential structural role and its presence is essential for fluoride channel function.</text>
</comment>
<comment type="subcellular location">
    <subcellularLocation>
        <location evidence="1">Cell inner membrane</location>
        <topology evidence="1">Multi-pass membrane protein</topology>
    </subcellularLocation>
</comment>
<comment type="similarity">
    <text evidence="1">Belongs to the fluoride channel Fluc/FEX (TC 1.A.43) family.</text>
</comment>
<organism>
    <name type="scientific">Desulfotalea psychrophila (strain LSv54 / DSM 12343)</name>
    <dbReference type="NCBI Taxonomy" id="177439"/>
    <lineage>
        <taxon>Bacteria</taxon>
        <taxon>Pseudomonadati</taxon>
        <taxon>Thermodesulfobacteriota</taxon>
        <taxon>Desulfobulbia</taxon>
        <taxon>Desulfobulbales</taxon>
        <taxon>Desulfocapsaceae</taxon>
        <taxon>Desulfotalea</taxon>
    </lineage>
</organism>
<dbReference type="EMBL" id="CR522870">
    <property type="protein sequence ID" value="CAG35898.1"/>
    <property type="molecule type" value="Genomic_DNA"/>
</dbReference>
<dbReference type="RefSeq" id="WP_011188410.1">
    <property type="nucleotide sequence ID" value="NC_006138.1"/>
</dbReference>
<dbReference type="SMR" id="Q6AP26"/>
<dbReference type="STRING" id="177439.DP1169"/>
<dbReference type="KEGG" id="dps:DP1169"/>
<dbReference type="eggNOG" id="COG0239">
    <property type="taxonomic scope" value="Bacteria"/>
</dbReference>
<dbReference type="HOGENOM" id="CLU_114342_3_0_7"/>
<dbReference type="OrthoDB" id="9806299at2"/>
<dbReference type="Proteomes" id="UP000000602">
    <property type="component" value="Chromosome"/>
</dbReference>
<dbReference type="GO" id="GO:0005886">
    <property type="term" value="C:plasma membrane"/>
    <property type="evidence" value="ECO:0007669"/>
    <property type="project" value="UniProtKB-SubCell"/>
</dbReference>
<dbReference type="GO" id="GO:0062054">
    <property type="term" value="F:fluoride channel activity"/>
    <property type="evidence" value="ECO:0007669"/>
    <property type="project" value="UniProtKB-UniRule"/>
</dbReference>
<dbReference type="GO" id="GO:0046872">
    <property type="term" value="F:metal ion binding"/>
    <property type="evidence" value="ECO:0007669"/>
    <property type="project" value="UniProtKB-KW"/>
</dbReference>
<dbReference type="GO" id="GO:0140114">
    <property type="term" value="P:cellular detoxification of fluoride"/>
    <property type="evidence" value="ECO:0007669"/>
    <property type="project" value="UniProtKB-UniRule"/>
</dbReference>
<dbReference type="HAMAP" id="MF_00454">
    <property type="entry name" value="FluC"/>
    <property type="match status" value="1"/>
</dbReference>
<dbReference type="InterPro" id="IPR003691">
    <property type="entry name" value="FluC"/>
</dbReference>
<dbReference type="NCBIfam" id="TIGR00494">
    <property type="entry name" value="crcB"/>
    <property type="match status" value="1"/>
</dbReference>
<dbReference type="PANTHER" id="PTHR28259">
    <property type="entry name" value="FLUORIDE EXPORT PROTEIN 1-RELATED"/>
    <property type="match status" value="1"/>
</dbReference>
<dbReference type="PANTHER" id="PTHR28259:SF18">
    <property type="entry name" value="FLUORIDE-SPECIFIC ION CHANNEL FLUC"/>
    <property type="match status" value="1"/>
</dbReference>
<dbReference type="Pfam" id="PF02537">
    <property type="entry name" value="CRCB"/>
    <property type="match status" value="1"/>
</dbReference>
<accession>Q6AP26</accession>
<gene>
    <name evidence="1" type="primary">fluC</name>
    <name evidence="1" type="synonym">crcB</name>
    <name type="ordered locus">DP1169</name>
</gene>
<keyword id="KW-0997">Cell inner membrane</keyword>
<keyword id="KW-1003">Cell membrane</keyword>
<keyword id="KW-0407">Ion channel</keyword>
<keyword id="KW-0406">Ion transport</keyword>
<keyword id="KW-0472">Membrane</keyword>
<keyword id="KW-0479">Metal-binding</keyword>
<keyword id="KW-1185">Reference proteome</keyword>
<keyword id="KW-0915">Sodium</keyword>
<keyword id="KW-0812">Transmembrane</keyword>
<keyword id="KW-1133">Transmembrane helix</keyword>
<keyword id="KW-0813">Transport</keyword>
<name>FLUC_DESPS</name>
<reference key="1">
    <citation type="journal article" date="2004" name="Environ. Microbiol.">
        <title>The genome of Desulfotalea psychrophila, a sulfate-reducing bacterium from permanently cold Arctic sediments.</title>
        <authorList>
            <person name="Rabus R."/>
            <person name="Ruepp A."/>
            <person name="Frickey T."/>
            <person name="Rattei T."/>
            <person name="Fartmann B."/>
            <person name="Stark M."/>
            <person name="Bauer M."/>
            <person name="Zibat A."/>
            <person name="Lombardot T."/>
            <person name="Becker I."/>
            <person name="Amann J."/>
            <person name="Gellner K."/>
            <person name="Teeling H."/>
            <person name="Leuschner W.D."/>
            <person name="Gloeckner F.-O."/>
            <person name="Lupas A.N."/>
            <person name="Amann R."/>
            <person name="Klenk H.-P."/>
        </authorList>
    </citation>
    <scope>NUCLEOTIDE SEQUENCE [LARGE SCALE GENOMIC DNA]</scope>
    <source>
        <strain>DSM 12343 / LSv54</strain>
    </source>
</reference>
<evidence type="ECO:0000255" key="1">
    <source>
        <dbReference type="HAMAP-Rule" id="MF_00454"/>
    </source>
</evidence>
<protein>
    <recommendedName>
        <fullName evidence="1">Fluoride-specific ion channel FluC</fullName>
    </recommendedName>
</protein>